<organism>
    <name type="scientific">Pelagibacter ubique (strain HTCC1062)</name>
    <dbReference type="NCBI Taxonomy" id="335992"/>
    <lineage>
        <taxon>Bacteria</taxon>
        <taxon>Pseudomonadati</taxon>
        <taxon>Pseudomonadota</taxon>
        <taxon>Alphaproteobacteria</taxon>
        <taxon>Candidatus Pelagibacterales</taxon>
        <taxon>Candidatus Pelagibacteraceae</taxon>
        <taxon>Candidatus Pelagibacter</taxon>
    </lineage>
</organism>
<keyword id="KW-0068">Autocatalytic cleavage</keyword>
<keyword id="KW-0227">DNA damage</keyword>
<keyword id="KW-0234">DNA repair</keyword>
<keyword id="KW-0235">DNA replication</keyword>
<keyword id="KW-0238">DNA-binding</keyword>
<keyword id="KW-0378">Hydrolase</keyword>
<keyword id="KW-1185">Reference proteome</keyword>
<keyword id="KW-0678">Repressor</keyword>
<keyword id="KW-0742">SOS response</keyword>
<keyword id="KW-0804">Transcription</keyword>
<keyword id="KW-0805">Transcription regulation</keyword>
<gene>
    <name evidence="1" type="primary">lexA</name>
    <name type="ordered locus">SAR11_0921</name>
</gene>
<name>LEXA_PELUB</name>
<feature type="chain" id="PRO_1000001315" description="LexA repressor">
    <location>
        <begin position="1"/>
        <end position="225"/>
    </location>
</feature>
<feature type="DNA-binding region" description="H-T-H motif" evidence="1">
    <location>
        <begin position="26"/>
        <end position="46"/>
    </location>
</feature>
<feature type="active site" description="For autocatalytic cleavage activity" evidence="1">
    <location>
        <position position="146"/>
    </location>
</feature>
<feature type="active site" description="For autocatalytic cleavage activity" evidence="1">
    <location>
        <position position="184"/>
    </location>
</feature>
<feature type="site" description="Cleavage; by autolysis" evidence="1">
    <location>
        <begin position="111"/>
        <end position="112"/>
    </location>
</feature>
<reference key="1">
    <citation type="journal article" date="2005" name="Science">
        <title>Genome streamlining in a cosmopolitan oceanic bacterium.</title>
        <authorList>
            <person name="Giovannoni S.J."/>
            <person name="Tripp H.J."/>
            <person name="Givan S."/>
            <person name="Podar M."/>
            <person name="Vergin K.L."/>
            <person name="Baptista D."/>
            <person name="Bibbs L."/>
            <person name="Eads J."/>
            <person name="Richardson T.H."/>
            <person name="Noordewier M."/>
            <person name="Rappe M.S."/>
            <person name="Short J.M."/>
            <person name="Carrington J.C."/>
            <person name="Mathur E.J."/>
        </authorList>
    </citation>
    <scope>NUCLEOTIDE SEQUENCE [LARGE SCALE GENOMIC DNA]</scope>
    <source>
        <strain>HTCC1062</strain>
    </source>
</reference>
<protein>
    <recommendedName>
        <fullName evidence="1">LexA repressor</fullName>
        <ecNumber evidence="1">3.4.21.88</ecNumber>
    </recommendedName>
</protein>
<proteinExistence type="inferred from homology"/>
<accession>Q4FM55</accession>
<comment type="function">
    <text evidence="1">Represses a number of genes involved in the response to DNA damage (SOS response), including recA and lexA. In the presence of single-stranded DNA, RecA interacts with LexA causing an autocatalytic cleavage which disrupts the DNA-binding part of LexA, leading to derepression of the SOS regulon and eventually DNA repair.</text>
</comment>
<comment type="catalytic activity">
    <reaction evidence="1">
        <text>Hydrolysis of Ala-|-Gly bond in repressor LexA.</text>
        <dbReference type="EC" id="3.4.21.88"/>
    </reaction>
</comment>
<comment type="subunit">
    <text evidence="1">Homodimer.</text>
</comment>
<comment type="similarity">
    <text evidence="1">Belongs to the peptidase S24 family.</text>
</comment>
<evidence type="ECO:0000255" key="1">
    <source>
        <dbReference type="HAMAP-Rule" id="MF_00015"/>
    </source>
</evidence>
<dbReference type="EC" id="3.4.21.88" evidence="1"/>
<dbReference type="EMBL" id="CP000084">
    <property type="protein sequence ID" value="AAZ21734.1"/>
    <property type="molecule type" value="Genomic_DNA"/>
</dbReference>
<dbReference type="RefSeq" id="WP_006997000.1">
    <property type="nucleotide sequence ID" value="NC_007205.1"/>
</dbReference>
<dbReference type="SMR" id="Q4FM55"/>
<dbReference type="STRING" id="335992.SAR11_0921"/>
<dbReference type="MEROPS" id="S24.001"/>
<dbReference type="GeneID" id="66295414"/>
<dbReference type="KEGG" id="pub:SAR11_0921"/>
<dbReference type="eggNOG" id="COG1974">
    <property type="taxonomic scope" value="Bacteria"/>
</dbReference>
<dbReference type="HOGENOM" id="CLU_066192_45_2_5"/>
<dbReference type="OrthoDB" id="9802364at2"/>
<dbReference type="Proteomes" id="UP000002528">
    <property type="component" value="Chromosome"/>
</dbReference>
<dbReference type="GO" id="GO:0003677">
    <property type="term" value="F:DNA binding"/>
    <property type="evidence" value="ECO:0007669"/>
    <property type="project" value="UniProtKB-UniRule"/>
</dbReference>
<dbReference type="GO" id="GO:0004252">
    <property type="term" value="F:serine-type endopeptidase activity"/>
    <property type="evidence" value="ECO:0007669"/>
    <property type="project" value="UniProtKB-UniRule"/>
</dbReference>
<dbReference type="GO" id="GO:0006281">
    <property type="term" value="P:DNA repair"/>
    <property type="evidence" value="ECO:0007669"/>
    <property type="project" value="UniProtKB-UniRule"/>
</dbReference>
<dbReference type="GO" id="GO:0006260">
    <property type="term" value="P:DNA replication"/>
    <property type="evidence" value="ECO:0007669"/>
    <property type="project" value="UniProtKB-UniRule"/>
</dbReference>
<dbReference type="GO" id="GO:0045892">
    <property type="term" value="P:negative regulation of DNA-templated transcription"/>
    <property type="evidence" value="ECO:0007669"/>
    <property type="project" value="UniProtKB-UniRule"/>
</dbReference>
<dbReference type="GO" id="GO:0006508">
    <property type="term" value="P:proteolysis"/>
    <property type="evidence" value="ECO:0007669"/>
    <property type="project" value="InterPro"/>
</dbReference>
<dbReference type="GO" id="GO:0009432">
    <property type="term" value="P:SOS response"/>
    <property type="evidence" value="ECO:0007669"/>
    <property type="project" value="UniProtKB-UniRule"/>
</dbReference>
<dbReference type="CDD" id="cd06529">
    <property type="entry name" value="S24_LexA-like"/>
    <property type="match status" value="1"/>
</dbReference>
<dbReference type="Gene3D" id="2.10.109.10">
    <property type="entry name" value="Umud Fragment, subunit A"/>
    <property type="match status" value="1"/>
</dbReference>
<dbReference type="Gene3D" id="1.10.10.10">
    <property type="entry name" value="Winged helix-like DNA-binding domain superfamily/Winged helix DNA-binding domain"/>
    <property type="match status" value="1"/>
</dbReference>
<dbReference type="HAMAP" id="MF_00015">
    <property type="entry name" value="LexA"/>
    <property type="match status" value="1"/>
</dbReference>
<dbReference type="InterPro" id="IPR006200">
    <property type="entry name" value="LexA"/>
</dbReference>
<dbReference type="InterPro" id="IPR039418">
    <property type="entry name" value="LexA-like"/>
</dbReference>
<dbReference type="InterPro" id="IPR036286">
    <property type="entry name" value="LexA/Signal_pep-like_sf"/>
</dbReference>
<dbReference type="InterPro" id="IPR006199">
    <property type="entry name" value="LexA_DNA-bd_dom"/>
</dbReference>
<dbReference type="InterPro" id="IPR050077">
    <property type="entry name" value="LexA_repressor"/>
</dbReference>
<dbReference type="InterPro" id="IPR006197">
    <property type="entry name" value="Peptidase_S24_LexA"/>
</dbReference>
<dbReference type="InterPro" id="IPR015927">
    <property type="entry name" value="Peptidase_S24_S26A/B/C"/>
</dbReference>
<dbReference type="InterPro" id="IPR036388">
    <property type="entry name" value="WH-like_DNA-bd_sf"/>
</dbReference>
<dbReference type="InterPro" id="IPR036390">
    <property type="entry name" value="WH_DNA-bd_sf"/>
</dbReference>
<dbReference type="NCBIfam" id="TIGR00498">
    <property type="entry name" value="lexA"/>
    <property type="match status" value="1"/>
</dbReference>
<dbReference type="PANTHER" id="PTHR33516">
    <property type="entry name" value="LEXA REPRESSOR"/>
    <property type="match status" value="1"/>
</dbReference>
<dbReference type="PANTHER" id="PTHR33516:SF2">
    <property type="entry name" value="LEXA REPRESSOR-RELATED"/>
    <property type="match status" value="1"/>
</dbReference>
<dbReference type="Pfam" id="PF01726">
    <property type="entry name" value="LexA_DNA_bind"/>
    <property type="match status" value="1"/>
</dbReference>
<dbReference type="Pfam" id="PF00717">
    <property type="entry name" value="Peptidase_S24"/>
    <property type="match status" value="1"/>
</dbReference>
<dbReference type="PRINTS" id="PR00726">
    <property type="entry name" value="LEXASERPTASE"/>
</dbReference>
<dbReference type="SUPFAM" id="SSF51306">
    <property type="entry name" value="LexA/Signal peptidase"/>
    <property type="match status" value="1"/>
</dbReference>
<dbReference type="SUPFAM" id="SSF46785">
    <property type="entry name" value="Winged helix' DNA-binding domain"/>
    <property type="match status" value="1"/>
</dbReference>
<sequence>MLTKKQKNLLLFINKKLRASGVSPSYEEMKDSLNLKSKSGIHRLISALEERGFIRRLAHKARALEVIKLPETASANDIYNSFSPSVIKGGLDTENTNLNEMEIPVLGSIAAGTPVEAIQNEVSRIPLPSNLEKNGQYFGLKVQGDSMIEAGINEGDTVIIKRSDTADNGKIVVALIDEHEAMLKRIRRKGKTVALESANRNYETKIFGPDRVKVQGVLVSLYRNF</sequence>